<gene>
    <name evidence="1" type="primary">ccmE</name>
    <name evidence="1" type="synonym">cycJ</name>
    <name type="ordered locus">APH_0526</name>
</gene>
<accession>Q2GKI0</accession>
<feature type="chain" id="PRO_0000238792" description="Cytochrome c-type biogenesis protein CcmE">
    <location>
        <begin position="1"/>
        <end position="141"/>
    </location>
</feature>
<feature type="topological domain" description="Cytoplasmic" evidence="1">
    <location>
        <begin position="1"/>
        <end position="7"/>
    </location>
</feature>
<feature type="transmembrane region" description="Helical; Signal-anchor for type II membrane protein" evidence="1">
    <location>
        <begin position="8"/>
        <end position="28"/>
    </location>
</feature>
<feature type="topological domain" description="Periplasmic" evidence="1">
    <location>
        <begin position="29"/>
        <end position="141"/>
    </location>
</feature>
<feature type="binding site" description="covalent" evidence="1">
    <location>
        <position position="121"/>
    </location>
    <ligand>
        <name>heme</name>
        <dbReference type="ChEBI" id="CHEBI:30413"/>
    </ligand>
</feature>
<feature type="binding site" description="axial binding residue" evidence="1">
    <location>
        <position position="125"/>
    </location>
    <ligand>
        <name>heme</name>
        <dbReference type="ChEBI" id="CHEBI:30413"/>
    </ligand>
    <ligandPart>
        <name>Fe</name>
        <dbReference type="ChEBI" id="CHEBI:18248"/>
    </ligandPart>
</feature>
<comment type="function">
    <text evidence="1">Heme chaperone required for the biogenesis of c-type cytochromes. Transiently binds heme delivered by CcmC and transfers the heme to apo-cytochromes in a process facilitated by CcmF and CcmH.</text>
</comment>
<comment type="subcellular location">
    <subcellularLocation>
        <location evidence="1">Cell inner membrane</location>
        <topology evidence="1">Single-pass type II membrane protein</topology>
        <orientation evidence="1">Periplasmic side</orientation>
    </subcellularLocation>
</comment>
<comment type="similarity">
    <text evidence="1">Belongs to the CcmE/CycJ family.</text>
</comment>
<evidence type="ECO:0000255" key="1">
    <source>
        <dbReference type="HAMAP-Rule" id="MF_01959"/>
    </source>
</evidence>
<proteinExistence type="inferred from homology"/>
<sequence>MQRKHKRILFVAVSFIALGCVSAFVLFELSKSISFFCTPTELVADPIKSSRYPIRVGGMIVKGSIVRHGDSVTFSITDLGTELEVTYRGVLPPMFGEDVGAIAKGRFVDGVFIAEELLAKHDEKYMPKKYSSSDAAVIGSS</sequence>
<name>CCME_ANAPZ</name>
<reference key="1">
    <citation type="journal article" date="2006" name="PLoS Genet.">
        <title>Comparative genomics of emerging human ehrlichiosis agents.</title>
        <authorList>
            <person name="Dunning Hotopp J.C."/>
            <person name="Lin M."/>
            <person name="Madupu R."/>
            <person name="Crabtree J."/>
            <person name="Angiuoli S.V."/>
            <person name="Eisen J.A."/>
            <person name="Seshadri R."/>
            <person name="Ren Q."/>
            <person name="Wu M."/>
            <person name="Utterback T.R."/>
            <person name="Smith S."/>
            <person name="Lewis M."/>
            <person name="Khouri H."/>
            <person name="Zhang C."/>
            <person name="Niu H."/>
            <person name="Lin Q."/>
            <person name="Ohashi N."/>
            <person name="Zhi N."/>
            <person name="Nelson W.C."/>
            <person name="Brinkac L.M."/>
            <person name="Dodson R.J."/>
            <person name="Rosovitz M.J."/>
            <person name="Sundaram J.P."/>
            <person name="Daugherty S.C."/>
            <person name="Davidsen T."/>
            <person name="Durkin A.S."/>
            <person name="Gwinn M.L."/>
            <person name="Haft D.H."/>
            <person name="Selengut J.D."/>
            <person name="Sullivan S.A."/>
            <person name="Zafar N."/>
            <person name="Zhou L."/>
            <person name="Benahmed F."/>
            <person name="Forberger H."/>
            <person name="Halpin R."/>
            <person name="Mulligan S."/>
            <person name="Robinson J."/>
            <person name="White O."/>
            <person name="Rikihisa Y."/>
            <person name="Tettelin H."/>
        </authorList>
    </citation>
    <scope>NUCLEOTIDE SEQUENCE [LARGE SCALE GENOMIC DNA]</scope>
    <source>
        <strain>HZ</strain>
    </source>
</reference>
<organism>
    <name type="scientific">Anaplasma phagocytophilum (strain HZ)</name>
    <dbReference type="NCBI Taxonomy" id="212042"/>
    <lineage>
        <taxon>Bacteria</taxon>
        <taxon>Pseudomonadati</taxon>
        <taxon>Pseudomonadota</taxon>
        <taxon>Alphaproteobacteria</taxon>
        <taxon>Rickettsiales</taxon>
        <taxon>Anaplasmataceae</taxon>
        <taxon>Anaplasma</taxon>
        <taxon>phagocytophilum group</taxon>
    </lineage>
</organism>
<protein>
    <recommendedName>
        <fullName evidence="1">Cytochrome c-type biogenesis protein CcmE</fullName>
    </recommendedName>
    <alternativeName>
        <fullName evidence="1">Cytochrome c maturation protein E</fullName>
    </alternativeName>
    <alternativeName>
        <fullName evidence="1">Heme chaperone CcmE</fullName>
    </alternativeName>
</protein>
<keyword id="KW-0997">Cell inner membrane</keyword>
<keyword id="KW-1003">Cell membrane</keyword>
<keyword id="KW-0201">Cytochrome c-type biogenesis</keyword>
<keyword id="KW-0349">Heme</keyword>
<keyword id="KW-0408">Iron</keyword>
<keyword id="KW-0472">Membrane</keyword>
<keyword id="KW-0479">Metal-binding</keyword>
<keyword id="KW-0735">Signal-anchor</keyword>
<keyword id="KW-0812">Transmembrane</keyword>
<keyword id="KW-1133">Transmembrane helix</keyword>
<dbReference type="EMBL" id="CP000235">
    <property type="protein sequence ID" value="ABD44343.1"/>
    <property type="molecule type" value="Genomic_DNA"/>
</dbReference>
<dbReference type="RefSeq" id="WP_011450642.1">
    <property type="nucleotide sequence ID" value="NC_007797.1"/>
</dbReference>
<dbReference type="SMR" id="Q2GKI0"/>
<dbReference type="STRING" id="212042.APH_0526"/>
<dbReference type="PaxDb" id="212042-APH_0526"/>
<dbReference type="EnsemblBacteria" id="ABD44343">
    <property type="protein sequence ID" value="ABD44343"/>
    <property type="gene ID" value="APH_0526"/>
</dbReference>
<dbReference type="GeneID" id="92748343"/>
<dbReference type="KEGG" id="aph:APH_0526"/>
<dbReference type="eggNOG" id="COG2332">
    <property type="taxonomic scope" value="Bacteria"/>
</dbReference>
<dbReference type="HOGENOM" id="CLU_079503_1_1_5"/>
<dbReference type="Proteomes" id="UP000001943">
    <property type="component" value="Chromosome"/>
</dbReference>
<dbReference type="GO" id="GO:0005886">
    <property type="term" value="C:plasma membrane"/>
    <property type="evidence" value="ECO:0007669"/>
    <property type="project" value="UniProtKB-SubCell"/>
</dbReference>
<dbReference type="GO" id="GO:0020037">
    <property type="term" value="F:heme binding"/>
    <property type="evidence" value="ECO:0007669"/>
    <property type="project" value="InterPro"/>
</dbReference>
<dbReference type="GO" id="GO:0046872">
    <property type="term" value="F:metal ion binding"/>
    <property type="evidence" value="ECO:0007669"/>
    <property type="project" value="UniProtKB-KW"/>
</dbReference>
<dbReference type="GO" id="GO:0017004">
    <property type="term" value="P:cytochrome complex assembly"/>
    <property type="evidence" value="ECO:0007669"/>
    <property type="project" value="UniProtKB-KW"/>
</dbReference>
<dbReference type="Gene3D" id="2.40.50.140">
    <property type="entry name" value="Nucleic acid-binding proteins"/>
    <property type="match status" value="1"/>
</dbReference>
<dbReference type="HAMAP" id="MF_01959">
    <property type="entry name" value="CcmE"/>
    <property type="match status" value="1"/>
</dbReference>
<dbReference type="InterPro" id="IPR004329">
    <property type="entry name" value="CcmE"/>
</dbReference>
<dbReference type="InterPro" id="IPR036127">
    <property type="entry name" value="CcmE-like_sf"/>
</dbReference>
<dbReference type="InterPro" id="IPR012340">
    <property type="entry name" value="NA-bd_OB-fold"/>
</dbReference>
<dbReference type="NCBIfam" id="NF009727">
    <property type="entry name" value="PRK13254.1-1"/>
    <property type="match status" value="1"/>
</dbReference>
<dbReference type="PANTHER" id="PTHR34128">
    <property type="entry name" value="CYTOCHROME C-TYPE BIOGENESIS PROTEIN CCME HOMOLOG, MITOCHONDRIAL"/>
    <property type="match status" value="1"/>
</dbReference>
<dbReference type="PANTHER" id="PTHR34128:SF2">
    <property type="entry name" value="CYTOCHROME C-TYPE BIOGENESIS PROTEIN CCME HOMOLOG, MITOCHONDRIAL"/>
    <property type="match status" value="1"/>
</dbReference>
<dbReference type="Pfam" id="PF03100">
    <property type="entry name" value="CcmE"/>
    <property type="match status" value="1"/>
</dbReference>
<dbReference type="SUPFAM" id="SSF82093">
    <property type="entry name" value="Heme chaperone CcmE"/>
    <property type="match status" value="1"/>
</dbReference>